<keyword id="KW-0119">Carbohydrate metabolism</keyword>
<keyword id="KW-0961">Cell wall biogenesis/degradation</keyword>
<keyword id="KW-1015">Disulfide bond</keyword>
<keyword id="KW-0325">Glycoprotein</keyword>
<keyword id="KW-0456">Lyase</keyword>
<keyword id="KW-0624">Polysaccharide degradation</keyword>
<keyword id="KW-0964">Secreted</keyword>
<keyword id="KW-0732">Signal</keyword>
<organism>
    <name type="scientific">Aspergillus niger</name>
    <dbReference type="NCBI Taxonomy" id="5061"/>
    <lineage>
        <taxon>Eukaryota</taxon>
        <taxon>Fungi</taxon>
        <taxon>Dikarya</taxon>
        <taxon>Ascomycota</taxon>
        <taxon>Pezizomycotina</taxon>
        <taxon>Eurotiomycetes</taxon>
        <taxon>Eurotiomycetidae</taxon>
        <taxon>Eurotiales</taxon>
        <taxon>Aspergillaceae</taxon>
        <taxon>Aspergillus</taxon>
        <taxon>Aspergillus subgen. Circumdati</taxon>
    </lineage>
</organism>
<name>PELE_ASPNG</name>
<feature type="signal peptide" evidence="2">
    <location>
        <begin position="1"/>
        <end status="unknown"/>
    </location>
</feature>
<feature type="chain" id="PRO_0000394355" description="Probable pectin lyase E">
    <location>
        <begin status="unknown"/>
        <end position="370"/>
    </location>
</feature>
<feature type="active site" evidence="2">
    <location>
        <position position="245"/>
    </location>
</feature>
<feature type="glycosylation site" description="N-linked (GlcNAc...) asparagine" evidence="2">
    <location>
        <position position="307"/>
    </location>
</feature>
<feature type="disulfide bond" evidence="1">
    <location>
        <begin position="75"/>
        <end position="96"/>
    </location>
</feature>
<feature type="disulfide bond" evidence="1">
    <location>
        <begin position="311"/>
        <end position="319"/>
    </location>
</feature>
<sequence>MAFAHHAEAAQSSIVSGSAPGFAAGVTGGGDATPVYPTTIDELKEYLTSSSPQNIVIEGTFDFVGSEGTKTYQACNIYDCTPDNGGQAILNTLGGCGDTSTYDVTIDVAGYQGINVASDKTLVGKGTGAVLNGKGLRFVGVSNIIIQNIEITNLNPKYVWGGDALTFSDTNQIWIDHVTTSSLGRQHYSFGQESDNAITISNSFINGKTDYSATCDGHTYWGLELVGSSDQITFYKNYVYYTSGRSPALSGNTLFHAVNSVWADNSGHAIEGTDNGMGLFEGNVFNNVPTIVQSGFVGQLFSSESANLSQCETSLGRDCVTNAYTSSGSFSYDDDGFFVDFENLPIVSAASASSIASTVPSDAGNTLSST</sequence>
<evidence type="ECO:0000250" key="1"/>
<evidence type="ECO:0000255" key="2"/>
<evidence type="ECO:0000305" key="3"/>
<reference key="1">
    <citation type="submission" date="2008-05" db="EMBL/GenBank/DDBJ databases">
        <title>Assessment of the pectin degrading enzyme network of Aspergillus niger by functional genomics.</title>
        <authorList>
            <person name="Schaap P.J."/>
            <person name="van der Aa J."/>
            <person name="Martens-Uzunova E."/>
        </authorList>
    </citation>
    <scope>NUCLEOTIDE SEQUENCE [GENOMIC DNA]</scope>
    <source>
        <strain>ATCC 9029 / NRRL 3 / CBS 120.49 / DSM 2466 / N400 / FGSC 732</strain>
    </source>
</reference>
<dbReference type="EC" id="4.2.2.10"/>
<dbReference type="EMBL" id="EU719193">
    <property type="protein sequence ID" value="ACE00421.1"/>
    <property type="molecule type" value="Genomic_DNA"/>
</dbReference>
<dbReference type="SMR" id="B3GQR3"/>
<dbReference type="CAZy" id="PL1">
    <property type="family name" value="Polysaccharide Lyase Family 1"/>
</dbReference>
<dbReference type="GlyCosmos" id="B3GQR3">
    <property type="glycosylation" value="1 site, No reported glycans"/>
</dbReference>
<dbReference type="VEuPathDB" id="FungiDB:An11g04030"/>
<dbReference type="VEuPathDB" id="FungiDB:ASPNIDRAFT2_1213151"/>
<dbReference type="VEuPathDB" id="FungiDB:ATCC64974_58860"/>
<dbReference type="VEuPathDB" id="FungiDB:M747DRAFT_314510"/>
<dbReference type="GO" id="GO:0005576">
    <property type="term" value="C:extracellular region"/>
    <property type="evidence" value="ECO:0007669"/>
    <property type="project" value="UniProtKB-SubCell"/>
</dbReference>
<dbReference type="GO" id="GO:0030570">
    <property type="term" value="F:pectate lyase activity"/>
    <property type="evidence" value="ECO:0007669"/>
    <property type="project" value="InterPro"/>
</dbReference>
<dbReference type="GO" id="GO:0047490">
    <property type="term" value="F:pectin lyase activity"/>
    <property type="evidence" value="ECO:0000250"/>
    <property type="project" value="UniProtKB"/>
</dbReference>
<dbReference type="GO" id="GO:0071555">
    <property type="term" value="P:cell wall organization"/>
    <property type="evidence" value="ECO:0007669"/>
    <property type="project" value="UniProtKB-KW"/>
</dbReference>
<dbReference type="GO" id="GO:0045490">
    <property type="term" value="P:pectin catabolic process"/>
    <property type="evidence" value="ECO:0000250"/>
    <property type="project" value="UniProtKB"/>
</dbReference>
<dbReference type="FunFam" id="2.160.20.10:FF:000003">
    <property type="entry name" value="Pectin lyase F"/>
    <property type="match status" value="1"/>
</dbReference>
<dbReference type="Gene3D" id="2.160.20.10">
    <property type="entry name" value="Single-stranded right-handed beta-helix, Pectin lyase-like"/>
    <property type="match status" value="1"/>
</dbReference>
<dbReference type="InterPro" id="IPR002022">
    <property type="entry name" value="Pec_lyase"/>
</dbReference>
<dbReference type="InterPro" id="IPR012334">
    <property type="entry name" value="Pectin_lyas_fold"/>
</dbReference>
<dbReference type="InterPro" id="IPR011050">
    <property type="entry name" value="Pectin_lyase_fold/virulence"/>
</dbReference>
<dbReference type="InterPro" id="IPR045032">
    <property type="entry name" value="PEL"/>
</dbReference>
<dbReference type="PANTHER" id="PTHR31683">
    <property type="entry name" value="PECTATE LYASE 18-RELATED"/>
    <property type="match status" value="1"/>
</dbReference>
<dbReference type="PANTHER" id="PTHR31683:SF16">
    <property type="entry name" value="PECTIN LYASE A-RELATED"/>
    <property type="match status" value="1"/>
</dbReference>
<dbReference type="Pfam" id="PF00544">
    <property type="entry name" value="Pectate_lyase_4"/>
    <property type="match status" value="1"/>
</dbReference>
<dbReference type="SMART" id="SM00656">
    <property type="entry name" value="Amb_all"/>
    <property type="match status" value="1"/>
</dbReference>
<dbReference type="SUPFAM" id="SSF51126">
    <property type="entry name" value="Pectin lyase-like"/>
    <property type="match status" value="1"/>
</dbReference>
<protein>
    <recommendedName>
        <fullName>Probable pectin lyase E</fullName>
        <shortName>PLE</shortName>
        <ecNumber>4.2.2.10</ecNumber>
    </recommendedName>
</protein>
<accession>B3GQR3</accession>
<comment type="function">
    <text evidence="1">Pectinolytic enzymes consist of four classes of enzymes: pectin lyase, polygalacturonase, pectin methylesterase and rhamnogalacturonase. Among pectinolytic enzymes, pectin lyase is the most important in depolymerization of pectin, since it cleaves internal glycosidic bonds of highly methylated pectins (By similarity).</text>
</comment>
<comment type="catalytic activity">
    <reaction>
        <text>Eliminative cleavage of (1-&gt;4)-alpha-D-galacturonan methyl ester to give oligosaccharides with 4-deoxy-6-O-methyl-alpha-D-galact-4-enuronosyl groups at their non-reducing ends.</text>
        <dbReference type="EC" id="4.2.2.10"/>
    </reaction>
</comment>
<comment type="subcellular location">
    <subcellularLocation>
        <location evidence="1">Secreted</location>
    </subcellularLocation>
</comment>
<comment type="similarity">
    <text evidence="3">Belongs to the polysaccharide lyase 1 family.</text>
</comment>
<gene>
    <name type="primary">pelE</name>
</gene>
<proteinExistence type="inferred from homology"/>